<evidence type="ECO:0000255" key="1">
    <source>
        <dbReference type="HAMAP-Rule" id="MF_00168"/>
    </source>
</evidence>
<organism>
    <name type="scientific">Klebsiella pneumoniae (strain 342)</name>
    <dbReference type="NCBI Taxonomy" id="507522"/>
    <lineage>
        <taxon>Bacteria</taxon>
        <taxon>Pseudomonadati</taxon>
        <taxon>Pseudomonadota</taxon>
        <taxon>Gammaproteobacteria</taxon>
        <taxon>Enterobacterales</taxon>
        <taxon>Enterobacteriaceae</taxon>
        <taxon>Klebsiella/Raoultella group</taxon>
        <taxon>Klebsiella</taxon>
        <taxon>Klebsiella pneumoniae complex</taxon>
    </lineage>
</organism>
<sequence>MKFELDTTDGRARRGRLVFERGVVETPAFMPVGTYGTVKGMTPEEVEATGAQIILGNTFHLWLRPGQEIMKLHGDLHDFMQWKGPILTDSGGFQVFSLGDIRKITEQGVHFRNPINGDPIFLDPEKSMEIQYDLGSDIVMIFDECTPYPADWDYAKRSMEMSLRWAKRSRDRFDSLGNKNALFGIIQGSVYEDLRDISVKGLVEIGFDGYAVGGLAVGEPKEDMHRILEHVCPQIPADKPRYLMGVGKPEDLVEGVRRGIDMFDCVMPTRNARNGHLFVTDGVVKIRNAKHKSDTAPLDAECDCYTCRNYSRAYLHHLDRCNEILGARLNTIHNLRYYQRLMAGLRKAIEEGKLESFVTDFYQRQGRTVPPLNVD</sequence>
<gene>
    <name evidence="1" type="primary">tgt</name>
    <name type="ordered locus">KPK_4327</name>
</gene>
<comment type="function">
    <text evidence="1">Catalyzes the base-exchange of a guanine (G) residue with the queuine precursor 7-aminomethyl-7-deazaguanine (PreQ1) at position 34 (anticodon wobble position) in tRNAs with GU(N) anticodons (tRNA-Asp, -Asn, -His and -Tyr). Catalysis occurs through a double-displacement mechanism. The nucleophile active site attacks the C1' of nucleotide 34 to detach the guanine base from the RNA, forming a covalent enzyme-RNA intermediate. The proton acceptor active site deprotonates the incoming PreQ1, allowing a nucleophilic attack on the C1' of the ribose to form the product. After dissociation, two additional enzymatic reactions on the tRNA convert PreQ1 to queuine (Q), resulting in the hypermodified nucleoside queuosine (7-(((4,5-cis-dihydroxy-2-cyclopenten-1-yl)amino)methyl)-7-deazaguanosine).</text>
</comment>
<comment type="catalytic activity">
    <reaction evidence="1">
        <text>7-aminomethyl-7-carbaguanine + guanosine(34) in tRNA = 7-aminomethyl-7-carbaguanosine(34) in tRNA + guanine</text>
        <dbReference type="Rhea" id="RHEA:24104"/>
        <dbReference type="Rhea" id="RHEA-COMP:10341"/>
        <dbReference type="Rhea" id="RHEA-COMP:10342"/>
        <dbReference type="ChEBI" id="CHEBI:16235"/>
        <dbReference type="ChEBI" id="CHEBI:58703"/>
        <dbReference type="ChEBI" id="CHEBI:74269"/>
        <dbReference type="ChEBI" id="CHEBI:82833"/>
        <dbReference type="EC" id="2.4.2.29"/>
    </reaction>
</comment>
<comment type="cofactor">
    <cofactor evidence="1">
        <name>Zn(2+)</name>
        <dbReference type="ChEBI" id="CHEBI:29105"/>
    </cofactor>
    <text evidence="1">Binds 1 zinc ion per subunit.</text>
</comment>
<comment type="pathway">
    <text evidence="1">tRNA modification; tRNA-queuosine biosynthesis.</text>
</comment>
<comment type="subunit">
    <text evidence="1">Homodimer. Within each dimer, one monomer is responsible for RNA recognition and catalysis, while the other monomer binds to the replacement base PreQ1.</text>
</comment>
<comment type="similarity">
    <text evidence="1">Belongs to the queuine tRNA-ribosyltransferase family.</text>
</comment>
<keyword id="KW-0328">Glycosyltransferase</keyword>
<keyword id="KW-0479">Metal-binding</keyword>
<keyword id="KW-0671">Queuosine biosynthesis</keyword>
<keyword id="KW-0808">Transferase</keyword>
<keyword id="KW-0819">tRNA processing</keyword>
<keyword id="KW-0862">Zinc</keyword>
<dbReference type="EC" id="2.4.2.29" evidence="1"/>
<dbReference type="EMBL" id="CP000964">
    <property type="protein sequence ID" value="ACI08462.1"/>
    <property type="molecule type" value="Genomic_DNA"/>
</dbReference>
<dbReference type="SMR" id="B5Y0Y6"/>
<dbReference type="KEGG" id="kpe:KPK_4327"/>
<dbReference type="HOGENOM" id="CLU_022060_0_1_6"/>
<dbReference type="UniPathway" id="UPA00392"/>
<dbReference type="Proteomes" id="UP000001734">
    <property type="component" value="Chromosome"/>
</dbReference>
<dbReference type="GO" id="GO:0005829">
    <property type="term" value="C:cytosol"/>
    <property type="evidence" value="ECO:0007669"/>
    <property type="project" value="TreeGrafter"/>
</dbReference>
<dbReference type="GO" id="GO:0046872">
    <property type="term" value="F:metal ion binding"/>
    <property type="evidence" value="ECO:0007669"/>
    <property type="project" value="UniProtKB-KW"/>
</dbReference>
<dbReference type="GO" id="GO:0008479">
    <property type="term" value="F:tRNA-guanosine(34) queuine transglycosylase activity"/>
    <property type="evidence" value="ECO:0007669"/>
    <property type="project" value="UniProtKB-UniRule"/>
</dbReference>
<dbReference type="GO" id="GO:0008616">
    <property type="term" value="P:queuosine biosynthetic process"/>
    <property type="evidence" value="ECO:0007669"/>
    <property type="project" value="UniProtKB-UniRule"/>
</dbReference>
<dbReference type="GO" id="GO:0002099">
    <property type="term" value="P:tRNA wobble guanine modification"/>
    <property type="evidence" value="ECO:0007669"/>
    <property type="project" value="TreeGrafter"/>
</dbReference>
<dbReference type="GO" id="GO:0101030">
    <property type="term" value="P:tRNA-guanine transglycosylation"/>
    <property type="evidence" value="ECO:0007669"/>
    <property type="project" value="InterPro"/>
</dbReference>
<dbReference type="FunFam" id="3.20.20.105:FF:000001">
    <property type="entry name" value="Queuine tRNA-ribosyltransferase"/>
    <property type="match status" value="1"/>
</dbReference>
<dbReference type="Gene3D" id="3.20.20.105">
    <property type="entry name" value="Queuine tRNA-ribosyltransferase-like"/>
    <property type="match status" value="1"/>
</dbReference>
<dbReference type="HAMAP" id="MF_00168">
    <property type="entry name" value="Q_tRNA_Tgt"/>
    <property type="match status" value="1"/>
</dbReference>
<dbReference type="InterPro" id="IPR050076">
    <property type="entry name" value="ArchSynthase1/Queuine_TRR"/>
</dbReference>
<dbReference type="InterPro" id="IPR004803">
    <property type="entry name" value="TGT"/>
</dbReference>
<dbReference type="InterPro" id="IPR036511">
    <property type="entry name" value="TGT-like_sf"/>
</dbReference>
<dbReference type="InterPro" id="IPR002616">
    <property type="entry name" value="tRNA_ribo_trans-like"/>
</dbReference>
<dbReference type="NCBIfam" id="TIGR00430">
    <property type="entry name" value="Q_tRNA_tgt"/>
    <property type="match status" value="1"/>
</dbReference>
<dbReference type="NCBIfam" id="TIGR00449">
    <property type="entry name" value="tgt_general"/>
    <property type="match status" value="1"/>
</dbReference>
<dbReference type="PANTHER" id="PTHR46499">
    <property type="entry name" value="QUEUINE TRNA-RIBOSYLTRANSFERASE"/>
    <property type="match status" value="1"/>
</dbReference>
<dbReference type="PANTHER" id="PTHR46499:SF1">
    <property type="entry name" value="QUEUINE TRNA-RIBOSYLTRANSFERASE"/>
    <property type="match status" value="1"/>
</dbReference>
<dbReference type="Pfam" id="PF01702">
    <property type="entry name" value="TGT"/>
    <property type="match status" value="1"/>
</dbReference>
<dbReference type="SUPFAM" id="SSF51713">
    <property type="entry name" value="tRNA-guanine transglycosylase"/>
    <property type="match status" value="1"/>
</dbReference>
<name>TGT_KLEP3</name>
<proteinExistence type="inferred from homology"/>
<accession>B5Y0Y6</accession>
<feature type="chain" id="PRO_1000097549" description="Queuine tRNA-ribosyltransferase">
    <location>
        <begin position="1"/>
        <end position="375"/>
    </location>
</feature>
<feature type="region of interest" description="RNA binding" evidence="1">
    <location>
        <begin position="245"/>
        <end position="251"/>
    </location>
</feature>
<feature type="region of interest" description="RNA binding; important for wobble base 34 recognition" evidence="1">
    <location>
        <begin position="269"/>
        <end position="273"/>
    </location>
</feature>
<feature type="active site" description="Proton acceptor" evidence="1">
    <location>
        <position position="89"/>
    </location>
</feature>
<feature type="active site" description="Nucleophile" evidence="1">
    <location>
        <position position="264"/>
    </location>
</feature>
<feature type="binding site" evidence="1">
    <location>
        <begin position="89"/>
        <end position="93"/>
    </location>
    <ligand>
        <name>substrate</name>
    </ligand>
</feature>
<feature type="binding site" evidence="1">
    <location>
        <position position="143"/>
    </location>
    <ligand>
        <name>substrate</name>
    </ligand>
</feature>
<feature type="binding site" evidence="1">
    <location>
        <position position="187"/>
    </location>
    <ligand>
        <name>substrate</name>
    </ligand>
</feature>
<feature type="binding site" evidence="1">
    <location>
        <position position="214"/>
    </location>
    <ligand>
        <name>substrate</name>
    </ligand>
</feature>
<feature type="binding site" evidence="1">
    <location>
        <position position="302"/>
    </location>
    <ligand>
        <name>Zn(2+)</name>
        <dbReference type="ChEBI" id="CHEBI:29105"/>
    </ligand>
</feature>
<feature type="binding site" evidence="1">
    <location>
        <position position="304"/>
    </location>
    <ligand>
        <name>Zn(2+)</name>
        <dbReference type="ChEBI" id="CHEBI:29105"/>
    </ligand>
</feature>
<feature type="binding site" evidence="1">
    <location>
        <position position="307"/>
    </location>
    <ligand>
        <name>Zn(2+)</name>
        <dbReference type="ChEBI" id="CHEBI:29105"/>
    </ligand>
</feature>
<feature type="binding site" evidence="1">
    <location>
        <position position="333"/>
    </location>
    <ligand>
        <name>Zn(2+)</name>
        <dbReference type="ChEBI" id="CHEBI:29105"/>
    </ligand>
</feature>
<reference key="1">
    <citation type="journal article" date="2008" name="PLoS Genet.">
        <title>Complete genome sequence of the N2-fixing broad host range endophyte Klebsiella pneumoniae 342 and virulence predictions verified in mice.</title>
        <authorList>
            <person name="Fouts D.E."/>
            <person name="Tyler H.L."/>
            <person name="DeBoy R.T."/>
            <person name="Daugherty S."/>
            <person name="Ren Q."/>
            <person name="Badger J.H."/>
            <person name="Durkin A.S."/>
            <person name="Huot H."/>
            <person name="Shrivastava S."/>
            <person name="Kothari S."/>
            <person name="Dodson R.J."/>
            <person name="Mohamoud Y."/>
            <person name="Khouri H."/>
            <person name="Roesch L.F.W."/>
            <person name="Krogfelt K.A."/>
            <person name="Struve C."/>
            <person name="Triplett E.W."/>
            <person name="Methe B.A."/>
        </authorList>
    </citation>
    <scope>NUCLEOTIDE SEQUENCE [LARGE SCALE GENOMIC DNA]</scope>
    <source>
        <strain>342</strain>
    </source>
</reference>
<protein>
    <recommendedName>
        <fullName evidence="1">Queuine tRNA-ribosyltransferase</fullName>
        <ecNumber evidence="1">2.4.2.29</ecNumber>
    </recommendedName>
    <alternativeName>
        <fullName evidence="1">Guanine insertion enzyme</fullName>
    </alternativeName>
    <alternativeName>
        <fullName evidence="1">tRNA-guanine transglycosylase</fullName>
    </alternativeName>
</protein>